<dbReference type="EMBL" id="BA000017">
    <property type="protein sequence ID" value="BAB58735.1"/>
    <property type="molecule type" value="Genomic_DNA"/>
</dbReference>
<dbReference type="RefSeq" id="WP_000697134.1">
    <property type="nucleotide sequence ID" value="NC_002758.2"/>
</dbReference>
<dbReference type="SMR" id="P60075"/>
<dbReference type="KEGG" id="sav:SAV2573"/>
<dbReference type="HOGENOM" id="CLU_173137_0_2_9"/>
<dbReference type="PhylomeDB" id="P60075"/>
<dbReference type="Proteomes" id="UP000002481">
    <property type="component" value="Chromosome"/>
</dbReference>
<dbReference type="GO" id="GO:0005737">
    <property type="term" value="C:cytoplasm"/>
    <property type="evidence" value="ECO:0007669"/>
    <property type="project" value="UniProtKB-SubCell"/>
</dbReference>
<dbReference type="Gene3D" id="1.10.287.540">
    <property type="entry name" value="Helix hairpin bin"/>
    <property type="match status" value="1"/>
</dbReference>
<dbReference type="HAMAP" id="MF_01103">
    <property type="entry name" value="UPF0291"/>
    <property type="match status" value="1"/>
</dbReference>
<dbReference type="InterPro" id="IPR009242">
    <property type="entry name" value="DUF896"/>
</dbReference>
<dbReference type="PANTHER" id="PTHR37300:SF2">
    <property type="entry name" value="UPF0291 PROTEIN BC_1827"/>
    <property type="match status" value="1"/>
</dbReference>
<dbReference type="PANTHER" id="PTHR37300">
    <property type="entry name" value="UPF0291 PROTEIN CBO2609/CLC_2481"/>
    <property type="match status" value="1"/>
</dbReference>
<dbReference type="Pfam" id="PF05979">
    <property type="entry name" value="DUF896"/>
    <property type="match status" value="1"/>
</dbReference>
<dbReference type="SUPFAM" id="SSF158221">
    <property type="entry name" value="YnzC-like"/>
    <property type="match status" value="1"/>
</dbReference>
<accession>P60075</accession>
<accession>Q99R65</accession>
<organism>
    <name type="scientific">Staphylococcus aureus (strain Mu50 / ATCC 700699)</name>
    <dbReference type="NCBI Taxonomy" id="158878"/>
    <lineage>
        <taxon>Bacteria</taxon>
        <taxon>Bacillati</taxon>
        <taxon>Bacillota</taxon>
        <taxon>Bacilli</taxon>
        <taxon>Bacillales</taxon>
        <taxon>Staphylococcaceae</taxon>
        <taxon>Staphylococcus</taxon>
    </lineage>
</organism>
<keyword id="KW-0963">Cytoplasm</keyword>
<reference key="1">
    <citation type="journal article" date="2001" name="Lancet">
        <title>Whole genome sequencing of meticillin-resistant Staphylococcus aureus.</title>
        <authorList>
            <person name="Kuroda M."/>
            <person name="Ohta T."/>
            <person name="Uchiyama I."/>
            <person name="Baba T."/>
            <person name="Yuzawa H."/>
            <person name="Kobayashi I."/>
            <person name="Cui L."/>
            <person name="Oguchi A."/>
            <person name="Aoki K."/>
            <person name="Nagai Y."/>
            <person name="Lian J.-Q."/>
            <person name="Ito T."/>
            <person name="Kanamori M."/>
            <person name="Matsumaru H."/>
            <person name="Maruyama A."/>
            <person name="Murakami H."/>
            <person name="Hosoyama A."/>
            <person name="Mizutani-Ui Y."/>
            <person name="Takahashi N.K."/>
            <person name="Sawano T."/>
            <person name="Inoue R."/>
            <person name="Kaito C."/>
            <person name="Sekimizu K."/>
            <person name="Hirakawa H."/>
            <person name="Kuhara S."/>
            <person name="Goto S."/>
            <person name="Yabuzaki J."/>
            <person name="Kanehisa M."/>
            <person name="Yamashita A."/>
            <person name="Oshima K."/>
            <person name="Furuya K."/>
            <person name="Yoshino C."/>
            <person name="Shiba T."/>
            <person name="Hattori M."/>
            <person name="Ogasawara N."/>
            <person name="Hayashi H."/>
            <person name="Hiramatsu K."/>
        </authorList>
    </citation>
    <scope>NUCLEOTIDE SEQUENCE [LARGE SCALE GENOMIC DNA]</scope>
    <source>
        <strain>Mu50 / ATCC 700699</strain>
    </source>
</reference>
<protein>
    <recommendedName>
        <fullName evidence="1">UPF0291 protein SAV2573</fullName>
    </recommendedName>
</protein>
<gene>
    <name type="ordered locus">SAV2573</name>
</gene>
<feature type="chain" id="PRO_0000094986" description="UPF0291 protein SAV2573">
    <location>
        <begin position="1"/>
        <end position="76"/>
    </location>
</feature>
<proteinExistence type="inferred from homology"/>
<evidence type="ECO:0000255" key="1">
    <source>
        <dbReference type="HAMAP-Rule" id="MF_01103"/>
    </source>
</evidence>
<comment type="subcellular location">
    <subcellularLocation>
        <location evidence="1">Cytoplasm</location>
    </subcellularLocation>
</comment>
<comment type="similarity">
    <text evidence="1">Belongs to the UPF0291 family.</text>
</comment>
<name>Y2573_STAAM</name>
<sequence>MKILDRINELANKEKVQPLTVAEKQEQHALRQDYLSMIRGQVLTTFSTIKVVDPIGQDVTPDKVYDLRQQYGYIQN</sequence>